<reference key="1">
    <citation type="journal article" date="2017" name="Proc. Natl. Acad. Sci. U.S.A.">
        <title>Biosynthesis of isonitrile lipopeptides by conserved nonribosomal peptide synthetase gene clusters in Actinobacteria.</title>
        <authorList>
            <person name="Harris N.C."/>
            <person name="Sato M."/>
            <person name="Herman N.A."/>
            <person name="Twigg F."/>
            <person name="Cai W."/>
            <person name="Liu J."/>
            <person name="Zhu X."/>
            <person name="Downey J."/>
            <person name="Khalaf R."/>
            <person name="Martin J."/>
            <person name="Koshino H."/>
            <person name="Zhang W."/>
        </authorList>
    </citation>
    <scope>NUCLEOTIDE SEQUENCE [GENOMIC DNA]</scope>
    <scope>FUNCTION</scope>
    <source>
        <strain>NRRL 18370</strain>
    </source>
</reference>
<reference evidence="14" key="2">
    <citation type="journal article" date="2018" name="Angew. Chem. Int. Ed. Engl.">
        <title>Isonitrile Formation by a Non-Heme Iron(II)-Dependent Oxidase/Decarboxylase.</title>
        <authorList>
            <person name="Harris N.C."/>
            <person name="Born D.A."/>
            <person name="Cai W."/>
            <person name="Huang Y."/>
            <person name="Martin J."/>
            <person name="Khalaf R."/>
            <person name="Drennan C.L."/>
            <person name="Zhang W."/>
        </authorList>
    </citation>
    <scope>X-RAY CRYSTALLOGRAPHY (1.80 ANGSTROMS) IN COMPLEX WITH ZINC</scope>
    <scope>FUNCTION</scope>
    <scope>CATALYTIC ACTIVITY</scope>
    <scope>COFACTOR</scope>
    <scope>BIOPHYSICOCHEMICAL PROPERTIES</scope>
    <source>
        <strain>NRRL 18370</strain>
    </source>
</reference>
<reference evidence="15 16" key="3">
    <citation type="journal article" date="2020" name="Angew. Chem. Int. Ed.">
        <title>Pathway from N-Alkylglycine to Alkylisonitrile Catalyzed by Iron(II) and 2-Oxoglutarate-Dependent Oxygenases.</title>
        <authorList>
            <person name="Chen T.Y."/>
            <person name="Chen J."/>
            <person name="Tang Y."/>
            <person name="Zhou J."/>
            <person name="Guo Y."/>
            <person name="Chang W.C."/>
        </authorList>
    </citation>
    <scope>X-RAY CRYSTALLOGRAPHY (2.17 ANGSTROMS) IN COMPLEXES WITH FE(2+); (3R)-3-[(CARBOXYMETHYL)AMINO]BUTANOATE AND (3R)-3-{[CARBOXY(HYDROXY)METHYL]AMINO}BUTANOATE</scope>
    <scope>FUNCTION</scope>
    <scope>CATALYTIC ACTIVITY</scope>
    <scope>COFACTOR</scope>
    <scope>REACTION MECHANISM</scope>
</reference>
<reference evidence="17 18 19 20" key="4">
    <citation type="journal article" date="2021" name="J. Biol. Chem.">
        <title>Biochemical and crystallographic investigations into isonitrile formation by a nonheme iron-dependent oxidase/decarboxylase.</title>
        <authorList>
            <person name="Jonnalagadda R."/>
            <person name="Del Rio Flores A."/>
            <person name="Cai W."/>
            <person name="Mehmood R."/>
            <person name="Narayanamoorthy M."/>
            <person name="Ren C."/>
            <person name="Zaragoza J.P.T."/>
            <person name="Kulik H.J."/>
            <person name="Zhang W."/>
            <person name="Drennan C.L."/>
        </authorList>
    </citation>
    <scope>X-RAY CRYSTALLOGRAPHY (1.45 ANGSTROMS) IN COMPLEXES WITH FE(2+); (3R)-3-[(CARBOXYMETHYL)AMINO]BUTANOATE; 2-OXOGLUTARATE AND OXOVANADIUM</scope>
    <scope>FUNCTION</scope>
    <scope>CATALYTIC ACTIVITY</scope>
    <scope>COFACTOR</scope>
    <scope>MUTAGENESIS OF ARG-127 AND HIS-269</scope>
    <scope>REACTION MECHANISM</scope>
</reference>
<reference evidence="21" key="5">
    <citation type="journal article" date="2022" name="ACS Catal.">
        <title>Deciphering the Reaction Pathway of Mononuclear Iron Enzyme-Catalyzed N-C Triple Bond Formation in Isocyanide Lipopeptide and Polyketide Biosynthesis.</title>
        <authorList>
            <person name="Chen T.Y."/>
            <person name="Zheng Z."/>
            <person name="Zhang X."/>
            <person name="Chen J."/>
            <person name="Cha L."/>
            <person name="Tang Y."/>
            <person name="Guo Y."/>
            <person name="Zhou J."/>
            <person name="Wang B."/>
            <person name="Liu H.W."/>
            <person name="Chang W.C."/>
        </authorList>
    </citation>
    <scope>X-RAY CRYSTALLOGRAPHY (1.99 ANGSTROMS) IN COMPLEX WITH FE(2+) AND (3R)-3-(OXALOAMINO)BUTANOATE</scope>
    <scope>REACTION MECHANISM</scope>
</reference>
<protein>
    <recommendedName>
        <fullName evidence="7">(3R)-3-[(carboxymethyl)amino]fatty acid oxygenase/decarboxylase</fullName>
        <ecNumber evidence="2 3 4">1.14.11.78</ecNumber>
    </recommendedName>
</protein>
<proteinExistence type="evidence at protein level"/>
<accession>A0A3B6UEU3</accession>
<gene>
    <name evidence="6 12" type="primary">ScoE</name>
</gene>
<feature type="chain" id="PRO_0000458131" description="(3R)-3-[(carboxymethyl)amino]fatty acid oxygenase/decarboxylase">
    <location>
        <begin position="1"/>
        <end position="296"/>
    </location>
</feature>
<feature type="binding site" evidence="3 4 16 17">
    <location>
        <position position="66"/>
    </location>
    <ligand>
        <name>(3R)-3-[(carboxymethyl)amino]butanoate</name>
        <dbReference type="ChEBI" id="CHEBI:193081"/>
    </ligand>
</feature>
<feature type="binding site" evidence="3 15">
    <location>
        <position position="66"/>
    </location>
    <ligand>
        <name>(3R)-3-{[carboxy(hydroxy)methyl]amino}butanoate</name>
        <dbReference type="ChEBI" id="CHEBI:193083"/>
    </ligand>
</feature>
<feature type="binding site" evidence="3 4 16 17">
    <location>
        <position position="71"/>
    </location>
    <ligand>
        <name>(3R)-3-[(carboxymethyl)amino]butanoate</name>
        <dbReference type="ChEBI" id="CHEBI:193081"/>
    </ligand>
</feature>
<feature type="binding site" evidence="3 15">
    <location>
        <position position="71"/>
    </location>
    <ligand>
        <name>(3R)-3-{[carboxy(hydroxy)methyl]amino}butanoate</name>
        <dbReference type="ChEBI" id="CHEBI:193083"/>
    </ligand>
</feature>
<feature type="binding site" evidence="3 4 16 17">
    <location>
        <position position="98"/>
    </location>
    <ligand>
        <name>(3R)-3-[(carboxymethyl)amino]butanoate</name>
        <dbReference type="ChEBI" id="CHEBI:193081"/>
    </ligand>
</feature>
<feature type="binding site" evidence="3 15">
    <location>
        <position position="98"/>
    </location>
    <ligand>
        <name>(3R)-3-{[carboxy(hydroxy)methyl]amino}butanoate</name>
        <dbReference type="ChEBI" id="CHEBI:193083"/>
    </ligand>
</feature>
<feature type="binding site" evidence="3 4 5 9 14 15 16 17 21">
    <location>
        <position position="102"/>
    </location>
    <ligand>
        <name>Fe(2+)</name>
        <dbReference type="ChEBI" id="CHEBI:29033"/>
    </ligand>
</feature>
<feature type="binding site" evidence="3 4 5 9 14 15 16 17 21">
    <location>
        <position position="104"/>
    </location>
    <ligand>
        <name>Fe(2+)</name>
        <dbReference type="ChEBI" id="CHEBI:29033"/>
    </ligand>
</feature>
<feature type="binding site" evidence="3 4 16 17">
    <location>
        <position position="105"/>
    </location>
    <ligand>
        <name>(3R)-3-[(carboxymethyl)amino]butanoate</name>
        <dbReference type="ChEBI" id="CHEBI:193081"/>
    </ligand>
</feature>
<feature type="binding site" evidence="3 15">
    <location>
        <position position="105"/>
    </location>
    <ligand>
        <name>(3R)-3-{[carboxy(hydroxy)methyl]amino}butanoate</name>
        <dbReference type="ChEBI" id="CHEBI:193083"/>
    </ligand>
</feature>
<feature type="binding site" evidence="3 4 16 17">
    <location>
        <position position="163"/>
    </location>
    <ligand>
        <name>(3R)-3-[(carboxymethyl)amino]butanoate</name>
        <dbReference type="ChEBI" id="CHEBI:193081"/>
    </ligand>
</feature>
<feature type="binding site" evidence="3 15">
    <location>
        <position position="163"/>
    </location>
    <ligand>
        <name>(3R)-3-{[carboxy(hydroxy)methyl]amino}butanoate</name>
        <dbReference type="ChEBI" id="CHEBI:193083"/>
    </ligand>
</feature>
<feature type="binding site" evidence="3 4 5 9 14 15 16 17 21">
    <location>
        <position position="265"/>
    </location>
    <ligand>
        <name>Fe(2+)</name>
        <dbReference type="ChEBI" id="CHEBI:29033"/>
    </ligand>
</feature>
<feature type="binding site" evidence="11">
    <location>
        <position position="269"/>
    </location>
    <ligand>
        <name>2-oxoglutarate</name>
        <dbReference type="ChEBI" id="CHEBI:16810"/>
    </ligand>
</feature>
<feature type="binding site" evidence="3 4 16 17">
    <location>
        <position position="280"/>
    </location>
    <ligand>
        <name>(3R)-3-[(carboxymethyl)amino]butanoate</name>
        <dbReference type="ChEBI" id="CHEBI:193081"/>
    </ligand>
</feature>
<feature type="binding site" evidence="3 15">
    <location>
        <position position="280"/>
    </location>
    <ligand>
        <name>(3R)-3-{[carboxy(hydroxy)methyl]amino}butanoate</name>
        <dbReference type="ChEBI" id="CHEBI:193083"/>
    </ligand>
</feature>
<feature type="mutagenesis site" description="Decreased catalytic activity." evidence="4">
    <original>R</original>
    <variation>E</variation>
    <location>
        <position position="127"/>
    </location>
</feature>
<feature type="mutagenesis site" description="Decreased catalytic activity." evidence="4">
    <original>R</original>
    <variation>Q</variation>
    <location>
        <position position="127"/>
    </location>
</feature>
<feature type="mutagenesis site" description="Loss of the ability to produce both INBA and succinate from CABA and 2-oxoglutarate." evidence="4">
    <original>H</original>
    <variation>Q</variation>
    <location>
        <position position="269"/>
    </location>
</feature>
<feature type="strand" evidence="22">
    <location>
        <begin position="2"/>
        <end position="5"/>
    </location>
</feature>
<feature type="strand" evidence="22">
    <location>
        <begin position="13"/>
        <end position="17"/>
    </location>
</feature>
<feature type="turn" evidence="22">
    <location>
        <begin position="20"/>
        <end position="22"/>
    </location>
</feature>
<feature type="helix" evidence="22">
    <location>
        <begin position="25"/>
        <end position="38"/>
    </location>
</feature>
<feature type="strand" evidence="22">
    <location>
        <begin position="39"/>
        <end position="43"/>
    </location>
</feature>
<feature type="helix" evidence="22">
    <location>
        <begin position="50"/>
        <end position="60"/>
    </location>
</feature>
<feature type="strand" evidence="22">
    <location>
        <begin position="61"/>
        <end position="63"/>
    </location>
</feature>
<feature type="helix" evidence="22">
    <location>
        <begin position="69"/>
        <end position="71"/>
    </location>
</feature>
<feature type="strand" evidence="22">
    <location>
        <begin position="80"/>
        <end position="83"/>
    </location>
</feature>
<feature type="strand" evidence="22">
    <location>
        <begin position="93"/>
        <end position="96"/>
    </location>
</feature>
<feature type="strand" evidence="23">
    <location>
        <begin position="100"/>
        <end position="102"/>
    </location>
</feature>
<feature type="turn" evidence="22">
    <location>
        <begin position="104"/>
        <end position="107"/>
    </location>
</feature>
<feature type="strand" evidence="22">
    <location>
        <begin position="108"/>
        <end position="110"/>
    </location>
</feature>
<feature type="strand" evidence="22">
    <location>
        <begin position="113"/>
        <end position="121"/>
    </location>
</feature>
<feature type="strand" evidence="22">
    <location>
        <begin position="124"/>
        <end position="126"/>
    </location>
</feature>
<feature type="strand" evidence="22">
    <location>
        <begin position="129"/>
        <end position="133"/>
    </location>
</feature>
<feature type="helix" evidence="22">
    <location>
        <begin position="134"/>
        <end position="140"/>
    </location>
</feature>
<feature type="helix" evidence="22">
    <location>
        <begin position="143"/>
        <end position="149"/>
    </location>
</feature>
<feature type="strand" evidence="22">
    <location>
        <begin position="153"/>
        <end position="156"/>
    </location>
</feature>
<feature type="turn" evidence="22">
    <location>
        <begin position="159"/>
        <end position="161"/>
    </location>
</feature>
<feature type="helix" evidence="22">
    <location>
        <begin position="166"/>
        <end position="168"/>
    </location>
</feature>
<feature type="helix" evidence="22">
    <location>
        <begin position="173"/>
        <end position="183"/>
    </location>
</feature>
<feature type="strand" evidence="22">
    <location>
        <begin position="187"/>
        <end position="194"/>
    </location>
</feature>
<feature type="turn" evidence="22">
    <location>
        <begin position="196"/>
        <end position="198"/>
    </location>
</feature>
<feature type="strand" evidence="22">
    <location>
        <begin position="201"/>
        <end position="203"/>
    </location>
</feature>
<feature type="turn" evidence="22">
    <location>
        <begin position="207"/>
        <end position="209"/>
    </location>
</feature>
<feature type="strand" evidence="22">
    <location>
        <begin position="210"/>
        <end position="214"/>
    </location>
</feature>
<feature type="helix" evidence="22">
    <location>
        <begin position="224"/>
        <end position="232"/>
    </location>
</feature>
<feature type="turn" evidence="22">
    <location>
        <begin position="233"/>
        <end position="236"/>
    </location>
</feature>
<feature type="strand" evidence="22">
    <location>
        <begin position="245"/>
        <end position="248"/>
    </location>
</feature>
<feature type="strand" evidence="22">
    <location>
        <begin position="255"/>
        <end position="259"/>
    </location>
</feature>
<feature type="turn" evidence="22">
    <location>
        <begin position="260"/>
        <end position="262"/>
    </location>
</feature>
<feature type="strand" evidence="22">
    <location>
        <begin position="263"/>
        <end position="267"/>
    </location>
</feature>
<feature type="strand" evidence="22">
    <location>
        <begin position="277"/>
        <end position="284"/>
    </location>
</feature>
<organism evidence="13">
    <name type="scientific">Streptomyces coeruleorubidus</name>
    <dbReference type="NCBI Taxonomy" id="116188"/>
    <lineage>
        <taxon>Bacteria</taxon>
        <taxon>Bacillati</taxon>
        <taxon>Actinomycetota</taxon>
        <taxon>Actinomycetes</taxon>
        <taxon>Kitasatosporales</taxon>
        <taxon>Streptomycetaceae</taxon>
        <taxon>Streptomyces</taxon>
    </lineage>
</organism>
<dbReference type="EC" id="1.14.11.78" evidence="2 3 4"/>
<dbReference type="EMBL" id="OL448875">
    <property type="protein sequence ID" value="UYZ56984.1"/>
    <property type="molecule type" value="Genomic_DNA"/>
</dbReference>
<dbReference type="PDB" id="6DCH">
    <property type="method" value="X-ray"/>
    <property type="resolution" value="1.80 A"/>
    <property type="chains" value="A=1-296"/>
</dbReference>
<dbReference type="PDB" id="6L6W">
    <property type="method" value="X-ray"/>
    <property type="resolution" value="2.17 A"/>
    <property type="chains" value="A=1-296"/>
</dbReference>
<dbReference type="PDB" id="6L6X">
    <property type="method" value="X-ray"/>
    <property type="resolution" value="2.18 A"/>
    <property type="chains" value="A=1-296"/>
</dbReference>
<dbReference type="PDB" id="6XN6">
    <property type="method" value="X-ray"/>
    <property type="resolution" value="1.70 A"/>
    <property type="chains" value="A=1-296"/>
</dbReference>
<dbReference type="PDB" id="6XO3">
    <property type="method" value="X-ray"/>
    <property type="resolution" value="1.85 A"/>
    <property type="chains" value="A=1-296"/>
</dbReference>
<dbReference type="PDB" id="6XOJ">
    <property type="method" value="X-ray"/>
    <property type="resolution" value="1.45 A"/>
    <property type="chains" value="A=1-296"/>
</dbReference>
<dbReference type="PDB" id="6XPA">
    <property type="method" value="X-ray"/>
    <property type="resolution" value="2.10 A"/>
    <property type="chains" value="A=1-296"/>
</dbReference>
<dbReference type="PDB" id="7SCP">
    <property type="method" value="X-ray"/>
    <property type="resolution" value="1.99 A"/>
    <property type="chains" value="A=1-296"/>
</dbReference>
<dbReference type="PDBsum" id="6DCH"/>
<dbReference type="PDBsum" id="6L6W"/>
<dbReference type="PDBsum" id="6L6X"/>
<dbReference type="PDBsum" id="6XN6"/>
<dbReference type="PDBsum" id="6XO3"/>
<dbReference type="PDBsum" id="6XOJ"/>
<dbReference type="PDBsum" id="6XPA"/>
<dbReference type="PDBsum" id="7SCP"/>
<dbReference type="SMR" id="A0A3B6UEU3"/>
<dbReference type="BioCyc" id="MetaCyc:MONOMER-21815"/>
<dbReference type="GO" id="GO:0051213">
    <property type="term" value="F:dioxygenase activity"/>
    <property type="evidence" value="ECO:0007669"/>
    <property type="project" value="UniProtKB-KW"/>
</dbReference>
<dbReference type="GO" id="GO:0046872">
    <property type="term" value="F:metal ion binding"/>
    <property type="evidence" value="ECO:0007669"/>
    <property type="project" value="UniProtKB-KW"/>
</dbReference>
<dbReference type="Gene3D" id="3.60.130.10">
    <property type="entry name" value="Clavaminate synthase-like"/>
    <property type="match status" value="1"/>
</dbReference>
<dbReference type="InterPro" id="IPR042098">
    <property type="entry name" value="TauD-like_sf"/>
</dbReference>
<dbReference type="InterPro" id="IPR003819">
    <property type="entry name" value="TauD/TfdA-like"/>
</dbReference>
<dbReference type="InterPro" id="IPR051178">
    <property type="entry name" value="TfdA_dioxygenase"/>
</dbReference>
<dbReference type="PANTHER" id="PTHR43779:SF3">
    <property type="entry name" value="(3R)-3-[(CARBOXYMETHYL)AMINO]FATTY ACID OXYGENASE_DECARBOXYLASE"/>
    <property type="match status" value="1"/>
</dbReference>
<dbReference type="PANTHER" id="PTHR43779">
    <property type="entry name" value="DIOXYGENASE RV0097-RELATED"/>
    <property type="match status" value="1"/>
</dbReference>
<dbReference type="Pfam" id="PF02668">
    <property type="entry name" value="TauD"/>
    <property type="match status" value="1"/>
</dbReference>
<dbReference type="SUPFAM" id="SSF51197">
    <property type="entry name" value="Clavaminate synthase-like"/>
    <property type="match status" value="1"/>
</dbReference>
<name>INLPE_STRC4</name>
<comment type="function">
    <text evidence="1 2 3 4">Involved in the biosynthesis of a unique class of isonitrile lipopeptides (INLPs) (PubMed:28634299). Catalyzes the conversion of (3R)-3-[(carboxymethyl)amino]fatty acids such as (3R)-3-[(carboxymethyl)amino]butanoate (CABA) to (3R)-3-isocyanylbutanoate (INBA) through an oxidative decarboxylation mechanism, thereby generating the isonitrile group of INLPs (PubMed:29906336, PubMed:32074393, PubMed:33361191).</text>
</comment>
<comment type="catalytic activity">
    <reaction evidence="2 3 4">
        <text>a (3R)-3-[(carboxymethyl)amino]fatty acid + 2 2-oxoglutarate + 2 O2 = a (3R)-3-isocyanyl-fatty acid + 2 succinate + 3 CO2 + 2 H2O</text>
        <dbReference type="Rhea" id="RHEA:74931"/>
        <dbReference type="ChEBI" id="CHEBI:15377"/>
        <dbReference type="ChEBI" id="CHEBI:15379"/>
        <dbReference type="ChEBI" id="CHEBI:16526"/>
        <dbReference type="ChEBI" id="CHEBI:16810"/>
        <dbReference type="ChEBI" id="CHEBI:30031"/>
        <dbReference type="ChEBI" id="CHEBI:193080"/>
        <dbReference type="ChEBI" id="CHEBI:193084"/>
        <dbReference type="EC" id="1.14.11.78"/>
    </reaction>
    <physiologicalReaction direction="left-to-right" evidence="9">
        <dbReference type="Rhea" id="RHEA:74932"/>
    </physiologicalReaction>
</comment>
<comment type="catalytic activity">
    <reaction evidence="10 11">
        <text>a (3R)-3-[(carboxymethyl)amino]fatty acid + 2-oxoglutarate + O2 = a (3R)-3-{[carboxy(hydroxy)methyl]amino}fatty acid + succinate + CO2</text>
        <dbReference type="Rhea" id="RHEA:74939"/>
        <dbReference type="ChEBI" id="CHEBI:15379"/>
        <dbReference type="ChEBI" id="CHEBI:16526"/>
        <dbReference type="ChEBI" id="CHEBI:16810"/>
        <dbReference type="ChEBI" id="CHEBI:30031"/>
        <dbReference type="ChEBI" id="CHEBI:193080"/>
        <dbReference type="ChEBI" id="CHEBI:193082"/>
    </reaction>
    <physiologicalReaction direction="left-to-right" evidence="10 11">
        <dbReference type="Rhea" id="RHEA:74940"/>
    </physiologicalReaction>
</comment>
<comment type="catalytic activity">
    <reaction evidence="10 11">
        <text>a (3R)-3-{[carboxy(hydroxy)methyl]amino}fatty acid + 2-oxoglutarate + O2 = a (3R)-3-isocyanyl-fatty acid + succinate + 2 CO2 + 2 H2O</text>
        <dbReference type="Rhea" id="RHEA:74943"/>
        <dbReference type="ChEBI" id="CHEBI:15377"/>
        <dbReference type="ChEBI" id="CHEBI:15379"/>
        <dbReference type="ChEBI" id="CHEBI:16526"/>
        <dbReference type="ChEBI" id="CHEBI:16810"/>
        <dbReference type="ChEBI" id="CHEBI:30031"/>
        <dbReference type="ChEBI" id="CHEBI:193082"/>
        <dbReference type="ChEBI" id="CHEBI:193084"/>
    </reaction>
    <physiologicalReaction direction="left-to-right" evidence="10 11">
        <dbReference type="Rhea" id="RHEA:74944"/>
    </physiologicalReaction>
</comment>
<comment type="catalytic activity">
    <reaction evidence="2 3 4">
        <text>(3R)-3-[(carboxymethyl)amino]butanoate + 2 2-oxoglutarate + 2 O2 = (3R)-3-isocyanylbutanoate + 2 succinate + 3 CO2 + 2 H2O</text>
        <dbReference type="Rhea" id="RHEA:74935"/>
        <dbReference type="ChEBI" id="CHEBI:15377"/>
        <dbReference type="ChEBI" id="CHEBI:15379"/>
        <dbReference type="ChEBI" id="CHEBI:16526"/>
        <dbReference type="ChEBI" id="CHEBI:16810"/>
        <dbReference type="ChEBI" id="CHEBI:30031"/>
        <dbReference type="ChEBI" id="CHEBI:193081"/>
        <dbReference type="ChEBI" id="CHEBI:193085"/>
        <dbReference type="EC" id="1.14.11.78"/>
    </reaction>
    <physiologicalReaction direction="left-to-right" evidence="9">
        <dbReference type="Rhea" id="RHEA:74936"/>
    </physiologicalReaction>
</comment>
<comment type="catalytic activity">
    <reaction evidence="10 11">
        <text>(3R)-3-[(carboxymethyl)amino]butanoate + 2-oxoglutarate + O2 = (3R)-3-{[carboxy(hydroxy)methyl]amino}butanoate + succinate + CO2</text>
        <dbReference type="Rhea" id="RHEA:74947"/>
        <dbReference type="ChEBI" id="CHEBI:15379"/>
        <dbReference type="ChEBI" id="CHEBI:16526"/>
        <dbReference type="ChEBI" id="CHEBI:16810"/>
        <dbReference type="ChEBI" id="CHEBI:30031"/>
        <dbReference type="ChEBI" id="CHEBI:193081"/>
        <dbReference type="ChEBI" id="CHEBI:193083"/>
    </reaction>
    <physiologicalReaction direction="left-to-right" evidence="10 11">
        <dbReference type="Rhea" id="RHEA:74948"/>
    </physiologicalReaction>
</comment>
<comment type="catalytic activity">
    <reaction evidence="10 11">
        <text>(3R)-3-{[carboxy(hydroxy)methyl]amino}butanoate + 2-oxoglutarate + O2 = (3R)-3-isocyanylbutanoate + succinate + 2 CO2 + 2 H2O</text>
        <dbReference type="Rhea" id="RHEA:74951"/>
        <dbReference type="ChEBI" id="CHEBI:15377"/>
        <dbReference type="ChEBI" id="CHEBI:15379"/>
        <dbReference type="ChEBI" id="CHEBI:16526"/>
        <dbReference type="ChEBI" id="CHEBI:16810"/>
        <dbReference type="ChEBI" id="CHEBI:30031"/>
        <dbReference type="ChEBI" id="CHEBI:193083"/>
        <dbReference type="ChEBI" id="CHEBI:193085"/>
    </reaction>
    <physiologicalReaction direction="left-to-right" evidence="10 11">
        <dbReference type="Rhea" id="RHEA:74952"/>
    </physiologicalReaction>
</comment>
<comment type="cofactor">
    <cofactor evidence="2 3 4">
        <name>Fe(2+)</name>
        <dbReference type="ChEBI" id="CHEBI:29033"/>
    </cofactor>
</comment>
<comment type="biophysicochemical properties">
    <kinetics>
        <KM evidence="2">286 uM for (3R)-3-[(carboxymethyl)amino]butanoate</KM>
        <KM evidence="2">20.9 uM for 2-oxoglutarate</KM>
        <text evidence="2">kcat is 21.9 min(-1) with (3R)-3-[(carboxymethyl)amino]butanoate as substrate.</text>
    </kinetics>
</comment>
<comment type="miscellaneous">
    <text evidence="3 4">Isonitrile formation goes through two consecutive, but distinctive, 2-oxoglutarate-dpendent reactions catalyzed by this enzyme. In the first reaction, an Fe(IV)-oxo species is utilized to generate a (3R)-3-{[carboxy(hydroxy)methyl]amino}fatty acid. Then, its conversion into a (3R)-3-isocyanyl-fatty acid likely proceeds by decarboxylation-assisted desaturation.</text>
</comment>
<comment type="miscellaneous">
    <text evidence="11">In PDB structures 6XO3 and 6XOJ, the 2-oxoglutarate seems to be in an off-site binding mode (overlapping with the substrate binding site), which is not the binding site required for the reaction to proceed. The latter seems to be inducible and requires His-269.</text>
</comment>
<comment type="similarity">
    <text evidence="7">Belongs to the TfdA dioxygenase family.</text>
</comment>
<comment type="caution">
    <text evidence="2 8">Was originally thought to function on an ACP-bound intermediate, but ScoE was later shown to act only on a free acid substrate.</text>
</comment>
<keyword id="KW-0002">3D-structure</keyword>
<keyword id="KW-0223">Dioxygenase</keyword>
<keyword id="KW-0408">Iron</keyword>
<keyword id="KW-0479">Metal-binding</keyword>
<keyword id="KW-0560">Oxidoreductase</keyword>
<sequence length="296" mass="33716">MQIDEQPGNAIGAAVEGFDHATASDADIDALKSTIYTKKIAVLKGQDLSPQQFLALGKRLGRPEAYYEPMYQHPEVTEIFVSSNVPENGKQIGVPKTGKFWHADYQFMPDPFGITLIYPQVIPEKNRGTYFIDMGRAYDRLPEDLKKEISGTYCRHSVRKYFKIRPHDVYRPISEIIEEVERKTPAVVQPTTFTHPMTGETVLYISEGFTVGIEDQDGKPLDEELLKRLFDATGQLDESFEHDNIHLQSFEQGDLLVWDNRSLIHRARHTTTPEPTVSYRVTVHDERKLHDGIQAA</sequence>
<evidence type="ECO:0000269" key="1">
    <source>
    </source>
</evidence>
<evidence type="ECO:0000269" key="2">
    <source>
    </source>
</evidence>
<evidence type="ECO:0000269" key="3">
    <source>
    </source>
</evidence>
<evidence type="ECO:0000269" key="4">
    <source>
    </source>
</evidence>
<evidence type="ECO:0000269" key="5">
    <source>
    </source>
</evidence>
<evidence type="ECO:0000303" key="6">
    <source>
    </source>
</evidence>
<evidence type="ECO:0000305" key="7"/>
<evidence type="ECO:0000305" key="8">
    <source>
    </source>
</evidence>
<evidence type="ECO:0000305" key="9">
    <source>
    </source>
</evidence>
<evidence type="ECO:0000305" key="10">
    <source>
    </source>
</evidence>
<evidence type="ECO:0000305" key="11">
    <source>
    </source>
</evidence>
<evidence type="ECO:0000312" key="12">
    <source>
        <dbReference type="EMBL" id="UYZ56984.1"/>
    </source>
</evidence>
<evidence type="ECO:0000312" key="13">
    <source>
        <dbReference type="PDB" id="6DCH"/>
    </source>
</evidence>
<evidence type="ECO:0007744" key="14">
    <source>
        <dbReference type="PDB" id="6DCH"/>
    </source>
</evidence>
<evidence type="ECO:0007744" key="15">
    <source>
        <dbReference type="PDB" id="6L6W"/>
    </source>
</evidence>
<evidence type="ECO:0007744" key="16">
    <source>
        <dbReference type="PDB" id="6L6X"/>
    </source>
</evidence>
<evidence type="ECO:0007744" key="17">
    <source>
        <dbReference type="PDB" id="6XN6"/>
    </source>
</evidence>
<evidence type="ECO:0007744" key="18">
    <source>
        <dbReference type="PDB" id="6XO3"/>
    </source>
</evidence>
<evidence type="ECO:0007744" key="19">
    <source>
        <dbReference type="PDB" id="6XOJ"/>
    </source>
</evidence>
<evidence type="ECO:0007744" key="20">
    <source>
        <dbReference type="PDB" id="6XPA"/>
    </source>
</evidence>
<evidence type="ECO:0007744" key="21">
    <source>
        <dbReference type="PDB" id="7SCP"/>
    </source>
</evidence>
<evidence type="ECO:0007829" key="22">
    <source>
        <dbReference type="PDB" id="6XOJ"/>
    </source>
</evidence>
<evidence type="ECO:0007829" key="23">
    <source>
        <dbReference type="PDB" id="7SCP"/>
    </source>
</evidence>